<organism>
    <name type="scientific">Yersinia pestis bv. Antiqua (strain Antiqua)</name>
    <dbReference type="NCBI Taxonomy" id="360102"/>
    <lineage>
        <taxon>Bacteria</taxon>
        <taxon>Pseudomonadati</taxon>
        <taxon>Pseudomonadota</taxon>
        <taxon>Gammaproteobacteria</taxon>
        <taxon>Enterobacterales</taxon>
        <taxon>Yersiniaceae</taxon>
        <taxon>Yersinia</taxon>
    </lineage>
</organism>
<feature type="chain" id="PRO_1000014393" description="Glycogen synthase">
    <location>
        <begin position="1"/>
        <end position="476"/>
    </location>
</feature>
<feature type="binding site" evidence="1">
    <location>
        <position position="15"/>
    </location>
    <ligand>
        <name>ADP-alpha-D-glucose</name>
        <dbReference type="ChEBI" id="CHEBI:57498"/>
    </ligand>
</feature>
<keyword id="KW-0320">Glycogen biosynthesis</keyword>
<keyword id="KW-0328">Glycosyltransferase</keyword>
<keyword id="KW-0808">Transferase</keyword>
<dbReference type="EC" id="2.4.1.21" evidence="1"/>
<dbReference type="EMBL" id="CP000308">
    <property type="protein sequence ID" value="ABG15730.1"/>
    <property type="molecule type" value="Genomic_DNA"/>
</dbReference>
<dbReference type="RefSeq" id="WP_002209498.1">
    <property type="nucleotide sequence ID" value="NZ_CP009906.1"/>
</dbReference>
<dbReference type="SMR" id="Q1C1E2"/>
<dbReference type="CAZy" id="GT5">
    <property type="family name" value="Glycosyltransferase Family 5"/>
</dbReference>
<dbReference type="GeneID" id="57974765"/>
<dbReference type="KEGG" id="ypa:YPA_3768"/>
<dbReference type="UniPathway" id="UPA00164"/>
<dbReference type="Proteomes" id="UP000001971">
    <property type="component" value="Chromosome"/>
</dbReference>
<dbReference type="GO" id="GO:0005829">
    <property type="term" value="C:cytosol"/>
    <property type="evidence" value="ECO:0007669"/>
    <property type="project" value="TreeGrafter"/>
</dbReference>
<dbReference type="GO" id="GO:0009011">
    <property type="term" value="F:alpha-1,4-glucan glucosyltransferase (ADP-glucose donor) activity"/>
    <property type="evidence" value="ECO:0007669"/>
    <property type="project" value="UniProtKB-UniRule"/>
</dbReference>
<dbReference type="GO" id="GO:0004373">
    <property type="term" value="F:alpha-1,4-glucan glucosyltransferase (UDP-glucose donor) activity"/>
    <property type="evidence" value="ECO:0007669"/>
    <property type="project" value="InterPro"/>
</dbReference>
<dbReference type="GO" id="GO:0005978">
    <property type="term" value="P:glycogen biosynthetic process"/>
    <property type="evidence" value="ECO:0007669"/>
    <property type="project" value="UniProtKB-UniRule"/>
</dbReference>
<dbReference type="CDD" id="cd03791">
    <property type="entry name" value="GT5_Glycogen_synthase_DULL1-like"/>
    <property type="match status" value="1"/>
</dbReference>
<dbReference type="FunFam" id="3.40.50.2000:FF:000011">
    <property type="entry name" value="Glycogen synthase"/>
    <property type="match status" value="1"/>
</dbReference>
<dbReference type="Gene3D" id="3.40.50.2000">
    <property type="entry name" value="Glycogen Phosphorylase B"/>
    <property type="match status" value="2"/>
</dbReference>
<dbReference type="HAMAP" id="MF_00484">
    <property type="entry name" value="Glycogen_synth"/>
    <property type="match status" value="1"/>
</dbReference>
<dbReference type="InterPro" id="IPR001296">
    <property type="entry name" value="Glyco_trans_1"/>
</dbReference>
<dbReference type="InterPro" id="IPR011835">
    <property type="entry name" value="GS/SS"/>
</dbReference>
<dbReference type="InterPro" id="IPR013534">
    <property type="entry name" value="Starch_synth_cat_dom"/>
</dbReference>
<dbReference type="NCBIfam" id="TIGR02095">
    <property type="entry name" value="glgA"/>
    <property type="match status" value="1"/>
</dbReference>
<dbReference type="NCBIfam" id="NF001899">
    <property type="entry name" value="PRK00654.1-2"/>
    <property type="match status" value="1"/>
</dbReference>
<dbReference type="PANTHER" id="PTHR45825:SF11">
    <property type="entry name" value="ALPHA AMYLASE DOMAIN-CONTAINING PROTEIN"/>
    <property type="match status" value="1"/>
</dbReference>
<dbReference type="PANTHER" id="PTHR45825">
    <property type="entry name" value="GRANULE-BOUND STARCH SYNTHASE 1, CHLOROPLASTIC/AMYLOPLASTIC"/>
    <property type="match status" value="1"/>
</dbReference>
<dbReference type="Pfam" id="PF08323">
    <property type="entry name" value="Glyco_transf_5"/>
    <property type="match status" value="1"/>
</dbReference>
<dbReference type="Pfam" id="PF00534">
    <property type="entry name" value="Glycos_transf_1"/>
    <property type="match status" value="1"/>
</dbReference>
<dbReference type="SUPFAM" id="SSF53756">
    <property type="entry name" value="UDP-Glycosyltransferase/glycogen phosphorylase"/>
    <property type="match status" value="1"/>
</dbReference>
<reference key="1">
    <citation type="journal article" date="2006" name="J. Bacteriol.">
        <title>Complete genome sequence of Yersinia pestis strains Antiqua and Nepal516: evidence of gene reduction in an emerging pathogen.</title>
        <authorList>
            <person name="Chain P.S.G."/>
            <person name="Hu P."/>
            <person name="Malfatti S.A."/>
            <person name="Radnedge L."/>
            <person name="Larimer F."/>
            <person name="Vergez L.M."/>
            <person name="Worsham P."/>
            <person name="Chu M.C."/>
            <person name="Andersen G.L."/>
        </authorList>
    </citation>
    <scope>NUCLEOTIDE SEQUENCE [LARGE SCALE GENOMIC DNA]</scope>
    <source>
        <strain>Antiqua</strain>
    </source>
</reference>
<evidence type="ECO:0000255" key="1">
    <source>
        <dbReference type="HAMAP-Rule" id="MF_00484"/>
    </source>
</evidence>
<name>GLGA_YERPA</name>
<protein>
    <recommendedName>
        <fullName evidence="1">Glycogen synthase</fullName>
        <ecNumber evidence="1">2.4.1.21</ecNumber>
    </recommendedName>
    <alternativeName>
        <fullName evidence="1">Starch [bacterial glycogen] synthase</fullName>
    </alternativeName>
</protein>
<accession>Q1C1E2</accession>
<gene>
    <name evidence="1" type="primary">glgA</name>
    <name type="ordered locus">YPA_3768</name>
</gene>
<proteinExistence type="inferred from homology"/>
<comment type="function">
    <text evidence="1">Synthesizes alpha-1,4-glucan chains using ADP-glucose.</text>
</comment>
<comment type="catalytic activity">
    <reaction evidence="1">
        <text>[(1-&gt;4)-alpha-D-glucosyl](n) + ADP-alpha-D-glucose = [(1-&gt;4)-alpha-D-glucosyl](n+1) + ADP + H(+)</text>
        <dbReference type="Rhea" id="RHEA:18189"/>
        <dbReference type="Rhea" id="RHEA-COMP:9584"/>
        <dbReference type="Rhea" id="RHEA-COMP:9587"/>
        <dbReference type="ChEBI" id="CHEBI:15378"/>
        <dbReference type="ChEBI" id="CHEBI:15444"/>
        <dbReference type="ChEBI" id="CHEBI:57498"/>
        <dbReference type="ChEBI" id="CHEBI:456216"/>
        <dbReference type="EC" id="2.4.1.21"/>
    </reaction>
</comment>
<comment type="pathway">
    <text evidence="1">Glycan biosynthesis; glycogen biosynthesis.</text>
</comment>
<comment type="similarity">
    <text evidence="1">Belongs to the glycosyltransferase 1 family. Bacterial/plant glycogen synthase subfamily.</text>
</comment>
<sequence length="476" mass="52276">MRVLHVCSELFPLLKTGGLADVIGALPAAQLAEGADVRIILPAFPDLRRGIPETVLVREIDTFAGRVALRYGHYRGIGIYLIDAPALYDRAGSPYHDASLYAYSDNYLRFALLGWMACELACGLDGYWRPEVVHAHDWHAGLTCAYLAARGRPARSVFTVHNLAYQGLFSADHLSELHLPAEFFQIYGLEFYGQISYLKAGLFFADHVTTVSPTYAKEITQPAFGYGMEGLLQALARQGRLTGILNGVDSDIWDPQSDTLLPTRYDAENLQAKAINKTHLQTAMGLQLAENKPIFAVVSRLTVQKGLDLVLEALPELLALGGQLVVLGSGDATLQEAFLAAAAEHSGQVGVQIGYHEAFSHRIIAGSDVILVPSRFEPCGLTQLYGLKYGTLPLVRHTGGLADTVVDCALENLADGSASGFVFNECEAQALVKAIRRAFVLWSRPKHWRHVQRHAMRLDFGWQLAAVDYLSLYRRL</sequence>